<evidence type="ECO:0000255" key="1">
    <source>
        <dbReference type="HAMAP-Rule" id="MF_00344"/>
    </source>
</evidence>
<dbReference type="EC" id="6.3.5.2" evidence="1"/>
<dbReference type="EMBL" id="CR931997">
    <property type="protein sequence ID" value="CAI37897.1"/>
    <property type="molecule type" value="Genomic_DNA"/>
</dbReference>
<dbReference type="SMR" id="Q4JTG0"/>
<dbReference type="STRING" id="306537.jk1720"/>
<dbReference type="MEROPS" id="C26.A07"/>
<dbReference type="KEGG" id="cjk:jk1720"/>
<dbReference type="eggNOG" id="COG0518">
    <property type="taxonomic scope" value="Bacteria"/>
</dbReference>
<dbReference type="eggNOG" id="COG0519">
    <property type="taxonomic scope" value="Bacteria"/>
</dbReference>
<dbReference type="HOGENOM" id="CLU_014340_0_5_11"/>
<dbReference type="OrthoDB" id="9802219at2"/>
<dbReference type="UniPathway" id="UPA00189">
    <property type="reaction ID" value="UER00296"/>
</dbReference>
<dbReference type="Proteomes" id="UP000000545">
    <property type="component" value="Chromosome"/>
</dbReference>
<dbReference type="GO" id="GO:0005829">
    <property type="term" value="C:cytosol"/>
    <property type="evidence" value="ECO:0007669"/>
    <property type="project" value="TreeGrafter"/>
</dbReference>
<dbReference type="GO" id="GO:0005524">
    <property type="term" value="F:ATP binding"/>
    <property type="evidence" value="ECO:0007669"/>
    <property type="project" value="UniProtKB-UniRule"/>
</dbReference>
<dbReference type="GO" id="GO:0003921">
    <property type="term" value="F:GMP synthase activity"/>
    <property type="evidence" value="ECO:0007669"/>
    <property type="project" value="InterPro"/>
</dbReference>
<dbReference type="CDD" id="cd01742">
    <property type="entry name" value="GATase1_GMP_Synthase"/>
    <property type="match status" value="1"/>
</dbReference>
<dbReference type="CDD" id="cd01997">
    <property type="entry name" value="GMP_synthase_C"/>
    <property type="match status" value="1"/>
</dbReference>
<dbReference type="FunFam" id="3.30.300.10:FF:000002">
    <property type="entry name" value="GMP synthase [glutamine-hydrolyzing]"/>
    <property type="match status" value="1"/>
</dbReference>
<dbReference type="FunFam" id="3.40.50.620:FF:000001">
    <property type="entry name" value="GMP synthase [glutamine-hydrolyzing]"/>
    <property type="match status" value="1"/>
</dbReference>
<dbReference type="FunFam" id="3.40.50.880:FF:000001">
    <property type="entry name" value="GMP synthase [glutamine-hydrolyzing]"/>
    <property type="match status" value="1"/>
</dbReference>
<dbReference type="Gene3D" id="3.30.300.10">
    <property type="match status" value="1"/>
</dbReference>
<dbReference type="Gene3D" id="3.40.50.880">
    <property type="match status" value="1"/>
</dbReference>
<dbReference type="Gene3D" id="3.40.50.620">
    <property type="entry name" value="HUPs"/>
    <property type="match status" value="1"/>
</dbReference>
<dbReference type="HAMAP" id="MF_00344">
    <property type="entry name" value="GMP_synthase"/>
    <property type="match status" value="1"/>
</dbReference>
<dbReference type="InterPro" id="IPR029062">
    <property type="entry name" value="Class_I_gatase-like"/>
</dbReference>
<dbReference type="InterPro" id="IPR017926">
    <property type="entry name" value="GATASE"/>
</dbReference>
<dbReference type="InterPro" id="IPR001674">
    <property type="entry name" value="GMP_synth_C"/>
</dbReference>
<dbReference type="InterPro" id="IPR004739">
    <property type="entry name" value="GMP_synth_GATase"/>
</dbReference>
<dbReference type="InterPro" id="IPR022955">
    <property type="entry name" value="GMP_synthase"/>
</dbReference>
<dbReference type="InterPro" id="IPR025777">
    <property type="entry name" value="GMPS_ATP_PPase_dom"/>
</dbReference>
<dbReference type="InterPro" id="IPR022310">
    <property type="entry name" value="NAD/GMP_synthase"/>
</dbReference>
<dbReference type="InterPro" id="IPR014729">
    <property type="entry name" value="Rossmann-like_a/b/a_fold"/>
</dbReference>
<dbReference type="NCBIfam" id="TIGR00884">
    <property type="entry name" value="guaA_Cterm"/>
    <property type="match status" value="1"/>
</dbReference>
<dbReference type="NCBIfam" id="TIGR00888">
    <property type="entry name" value="guaA_Nterm"/>
    <property type="match status" value="1"/>
</dbReference>
<dbReference type="NCBIfam" id="NF000848">
    <property type="entry name" value="PRK00074.1"/>
    <property type="match status" value="1"/>
</dbReference>
<dbReference type="PANTHER" id="PTHR11922:SF2">
    <property type="entry name" value="GMP SYNTHASE [GLUTAMINE-HYDROLYZING]"/>
    <property type="match status" value="1"/>
</dbReference>
<dbReference type="PANTHER" id="PTHR11922">
    <property type="entry name" value="GMP SYNTHASE-RELATED"/>
    <property type="match status" value="1"/>
</dbReference>
<dbReference type="Pfam" id="PF00117">
    <property type="entry name" value="GATase"/>
    <property type="match status" value="1"/>
</dbReference>
<dbReference type="Pfam" id="PF00958">
    <property type="entry name" value="GMP_synt_C"/>
    <property type="match status" value="1"/>
</dbReference>
<dbReference type="Pfam" id="PF02540">
    <property type="entry name" value="NAD_synthase"/>
    <property type="match status" value="1"/>
</dbReference>
<dbReference type="PRINTS" id="PR00097">
    <property type="entry name" value="ANTSNTHASEII"/>
</dbReference>
<dbReference type="PRINTS" id="PR00099">
    <property type="entry name" value="CPSGATASE"/>
</dbReference>
<dbReference type="PRINTS" id="PR00096">
    <property type="entry name" value="GATASE"/>
</dbReference>
<dbReference type="SUPFAM" id="SSF52402">
    <property type="entry name" value="Adenine nucleotide alpha hydrolases-like"/>
    <property type="match status" value="1"/>
</dbReference>
<dbReference type="SUPFAM" id="SSF52317">
    <property type="entry name" value="Class I glutamine amidotransferase-like"/>
    <property type="match status" value="1"/>
</dbReference>
<dbReference type="SUPFAM" id="SSF54810">
    <property type="entry name" value="GMP synthetase C-terminal dimerisation domain"/>
    <property type="match status" value="1"/>
</dbReference>
<dbReference type="PROSITE" id="PS51273">
    <property type="entry name" value="GATASE_TYPE_1"/>
    <property type="match status" value="1"/>
</dbReference>
<dbReference type="PROSITE" id="PS51553">
    <property type="entry name" value="GMPS_ATP_PPASE"/>
    <property type="match status" value="1"/>
</dbReference>
<accession>Q4JTG0</accession>
<gene>
    <name evidence="1" type="primary">guaA</name>
    <name type="ordered locus">jk1720</name>
</gene>
<comment type="function">
    <text evidence="1">Catalyzes the synthesis of GMP from XMP.</text>
</comment>
<comment type="catalytic activity">
    <reaction evidence="1">
        <text>XMP + L-glutamine + ATP + H2O = GMP + L-glutamate + AMP + diphosphate + 2 H(+)</text>
        <dbReference type="Rhea" id="RHEA:11680"/>
        <dbReference type="ChEBI" id="CHEBI:15377"/>
        <dbReference type="ChEBI" id="CHEBI:15378"/>
        <dbReference type="ChEBI" id="CHEBI:29985"/>
        <dbReference type="ChEBI" id="CHEBI:30616"/>
        <dbReference type="ChEBI" id="CHEBI:33019"/>
        <dbReference type="ChEBI" id="CHEBI:57464"/>
        <dbReference type="ChEBI" id="CHEBI:58115"/>
        <dbReference type="ChEBI" id="CHEBI:58359"/>
        <dbReference type="ChEBI" id="CHEBI:456215"/>
        <dbReference type="EC" id="6.3.5.2"/>
    </reaction>
</comment>
<comment type="pathway">
    <text evidence="1">Purine metabolism; GMP biosynthesis; GMP from XMP (L-Gln route): step 1/1.</text>
</comment>
<comment type="subunit">
    <text evidence="1">Homodimer.</text>
</comment>
<proteinExistence type="inferred from homology"/>
<protein>
    <recommendedName>
        <fullName evidence="1">GMP synthase [glutamine-hydrolyzing]</fullName>
        <ecNumber evidence="1">6.3.5.2</ecNumber>
    </recommendedName>
    <alternativeName>
        <fullName evidence="1">GMP synthetase</fullName>
    </alternativeName>
    <alternativeName>
        <fullName evidence="1">Glutamine amidotransferase</fullName>
    </alternativeName>
</protein>
<feature type="chain" id="PRO_0000229419" description="GMP synthase [glutamine-hydrolyzing]">
    <location>
        <begin position="1"/>
        <end position="529"/>
    </location>
</feature>
<feature type="domain" description="Glutamine amidotransferase type-1" evidence="1">
    <location>
        <begin position="13"/>
        <end position="204"/>
    </location>
</feature>
<feature type="domain" description="GMPS ATP-PPase" evidence="1">
    <location>
        <begin position="205"/>
        <end position="403"/>
    </location>
</feature>
<feature type="active site" description="Nucleophile" evidence="1">
    <location>
        <position position="90"/>
    </location>
</feature>
<feature type="active site" evidence="1">
    <location>
        <position position="178"/>
    </location>
</feature>
<feature type="active site" evidence="1">
    <location>
        <position position="180"/>
    </location>
</feature>
<feature type="binding site" evidence="1">
    <location>
        <begin position="233"/>
        <end position="239"/>
    </location>
    <ligand>
        <name>ATP</name>
        <dbReference type="ChEBI" id="CHEBI:30616"/>
    </ligand>
</feature>
<reference key="1">
    <citation type="journal article" date="2005" name="J. Bacteriol.">
        <title>Complete genome sequence and analysis of the multiresistant nosocomial pathogen Corynebacterium jeikeium K411, a lipid-requiring bacterium of the human skin flora.</title>
        <authorList>
            <person name="Tauch A."/>
            <person name="Kaiser O."/>
            <person name="Hain T."/>
            <person name="Goesmann A."/>
            <person name="Weisshaar B."/>
            <person name="Albersmeier A."/>
            <person name="Bekel T."/>
            <person name="Bischoff N."/>
            <person name="Brune I."/>
            <person name="Chakraborty T."/>
            <person name="Kalinowski J."/>
            <person name="Meyer F."/>
            <person name="Rupp O."/>
            <person name="Schneiker S."/>
            <person name="Viehoever P."/>
            <person name="Puehler A."/>
        </authorList>
    </citation>
    <scope>NUCLEOTIDE SEQUENCE [LARGE SCALE GENOMIC DNA]</scope>
    <source>
        <strain>K411</strain>
    </source>
</reference>
<name>GUAA_CORJK</name>
<organism>
    <name type="scientific">Corynebacterium jeikeium (strain K411)</name>
    <dbReference type="NCBI Taxonomy" id="306537"/>
    <lineage>
        <taxon>Bacteria</taxon>
        <taxon>Bacillati</taxon>
        <taxon>Actinomycetota</taxon>
        <taxon>Actinomycetes</taxon>
        <taxon>Mycobacteriales</taxon>
        <taxon>Corynebacteriaceae</taxon>
        <taxon>Corynebacterium</taxon>
    </lineage>
</organism>
<keyword id="KW-0067">ATP-binding</keyword>
<keyword id="KW-0315">Glutamine amidotransferase</keyword>
<keyword id="KW-0332">GMP biosynthesis</keyword>
<keyword id="KW-0436">Ligase</keyword>
<keyword id="KW-0547">Nucleotide-binding</keyword>
<keyword id="KW-0658">Purine biosynthesis</keyword>
<keyword id="KW-1185">Reference proteome</keyword>
<sequence>MTQQDPAAAAPRPVLVVDFGAQYAQLIARRVREVNLYSEVIPHTMPADEVAAKNPAALILSGGPSSVYADDAPSLHPELLELGVPVFGICYGFQAMTQAMGGTVAKTGLREYGRTELQIQSEAGVLHEGMGESQQVWMSHGDSVSEAPEGFTVTARTEGAPVAAFECPEKRMAGVQYHPEVLHSPKGQEVLRRFLLETAGLEPTWTAGNIAEQLIEQVREQIGDEGRAICGLSGGVDSAVAAALVQRAIGDRLTCVFVDHGLLRAGEREQVEKDFVAATGAKLVTVDEREAFLQKLAGVTEPEAKRKAIGAEFIRSFERAVAGVLADAPEGSSVDFLVQGTLYPDVVESGGGTGTANIKSHHNVGGLPDDVEFELVEPLRLLFKDEVRAVGRELGLPEEIVARQPFPGPGLGIRIIGEVTEDRLETLRAADAIARAELTAAGLDDVIWQCPVVLLADVRSVGVQGDGRTYGHPIVLRPVSSEDAMTADWTRIPFDVLEKISTRITNEVEEVNRVVLDVTSKPPGTIEWE</sequence>